<accession>A5DS77</accession>
<accession>A5DS76</accession>
<keyword id="KW-0067">ATP-binding</keyword>
<keyword id="KW-0963">Cytoplasm</keyword>
<keyword id="KW-0347">Helicase</keyword>
<keyword id="KW-0378">Hydrolase</keyword>
<keyword id="KW-0866">Nonsense-mediated mRNA decay</keyword>
<keyword id="KW-0547">Nucleotide-binding</keyword>
<keyword id="KW-0539">Nucleus</keyword>
<keyword id="KW-1185">Reference proteome</keyword>
<keyword id="KW-0690">Ribosome biogenesis</keyword>
<keyword id="KW-0694">RNA-binding</keyword>
<keyword id="KW-0698">rRNA processing</keyword>
<comment type="function">
    <text evidence="1">ATP-dependent RNA helicase involved nonsense-mediated mRNA decay and ribosome biogenesis through rRNA processing.</text>
</comment>
<comment type="catalytic activity">
    <reaction>
        <text>ATP + H2O = ADP + phosphate + H(+)</text>
        <dbReference type="Rhea" id="RHEA:13065"/>
        <dbReference type="ChEBI" id="CHEBI:15377"/>
        <dbReference type="ChEBI" id="CHEBI:15378"/>
        <dbReference type="ChEBI" id="CHEBI:30616"/>
        <dbReference type="ChEBI" id="CHEBI:43474"/>
        <dbReference type="ChEBI" id="CHEBI:456216"/>
        <dbReference type="EC" id="3.6.4.13"/>
    </reaction>
</comment>
<comment type="subunit">
    <text evidence="1">Associates with polysomes.</text>
</comment>
<comment type="subcellular location">
    <subcellularLocation>
        <location evidence="1">Cytoplasm</location>
    </subcellularLocation>
    <subcellularLocation>
        <location evidence="1">Nucleus</location>
    </subcellularLocation>
</comment>
<comment type="domain">
    <text>The Q motif is unique to and characteristic of the DEAD box family of RNA helicases and controls ATP binding and hydrolysis.</text>
</comment>
<comment type="similarity">
    <text evidence="5">Belongs to the DEAD box helicase family. DDX5/DBP2 subfamily.</text>
</comment>
<comment type="sequence caution" evidence="5">
    <conflict type="erroneous gene model prediction">
        <sequence resource="EMBL-CDS" id="EDK42034"/>
    </conflict>
</comment>
<protein>
    <recommendedName>
        <fullName>ATP-dependent RNA helicase DBP2</fullName>
        <ecNumber>3.6.4.13</ecNumber>
    </recommendedName>
</protein>
<dbReference type="EC" id="3.6.4.13"/>
<dbReference type="EMBL" id="CH981524">
    <property type="protein sequence ID" value="EDK42034.1"/>
    <property type="status" value="ALT_SEQ"/>
    <property type="molecule type" value="Genomic_DNA"/>
</dbReference>
<dbReference type="EMBL" id="CH981524">
    <property type="protein sequence ID" value="EDK42035.1"/>
    <property type="molecule type" value="Genomic_DNA"/>
</dbReference>
<dbReference type="RefSeq" id="XP_001527692.1">
    <property type="nucleotide sequence ID" value="XM_001527642.1"/>
</dbReference>
<dbReference type="RefSeq" id="XP_001527693.1">
    <property type="nucleotide sequence ID" value="XM_001527643.1"/>
</dbReference>
<dbReference type="SMR" id="A5DS77"/>
<dbReference type="FunCoup" id="A5DS77">
    <property type="interactions" value="1164"/>
</dbReference>
<dbReference type="STRING" id="379508.A5DS77"/>
<dbReference type="GeneID" id="5234806"/>
<dbReference type="KEGG" id="lel:PVL30_000207"/>
<dbReference type="VEuPathDB" id="FungiDB:LELG_00213"/>
<dbReference type="eggNOG" id="KOG0331">
    <property type="taxonomic scope" value="Eukaryota"/>
</dbReference>
<dbReference type="HOGENOM" id="CLU_003041_16_9_1"/>
<dbReference type="InParanoid" id="A5DS77"/>
<dbReference type="OMA" id="STMPKFE"/>
<dbReference type="OrthoDB" id="196131at2759"/>
<dbReference type="Proteomes" id="UP000001996">
    <property type="component" value="Unassembled WGS sequence"/>
</dbReference>
<dbReference type="GO" id="GO:0005737">
    <property type="term" value="C:cytoplasm"/>
    <property type="evidence" value="ECO:0007669"/>
    <property type="project" value="UniProtKB-SubCell"/>
</dbReference>
<dbReference type="GO" id="GO:0005634">
    <property type="term" value="C:nucleus"/>
    <property type="evidence" value="ECO:0007669"/>
    <property type="project" value="UniProtKB-SubCell"/>
</dbReference>
<dbReference type="GO" id="GO:0005524">
    <property type="term" value="F:ATP binding"/>
    <property type="evidence" value="ECO:0007669"/>
    <property type="project" value="UniProtKB-KW"/>
</dbReference>
<dbReference type="GO" id="GO:0016887">
    <property type="term" value="F:ATP hydrolysis activity"/>
    <property type="evidence" value="ECO:0007669"/>
    <property type="project" value="RHEA"/>
</dbReference>
<dbReference type="GO" id="GO:0003723">
    <property type="term" value="F:RNA binding"/>
    <property type="evidence" value="ECO:0007669"/>
    <property type="project" value="UniProtKB-KW"/>
</dbReference>
<dbReference type="GO" id="GO:0003724">
    <property type="term" value="F:RNA helicase activity"/>
    <property type="evidence" value="ECO:0007669"/>
    <property type="project" value="UniProtKB-EC"/>
</dbReference>
<dbReference type="GO" id="GO:0000184">
    <property type="term" value="P:nuclear-transcribed mRNA catabolic process, nonsense-mediated decay"/>
    <property type="evidence" value="ECO:0007669"/>
    <property type="project" value="UniProtKB-KW"/>
</dbReference>
<dbReference type="GO" id="GO:0006364">
    <property type="term" value="P:rRNA processing"/>
    <property type="evidence" value="ECO:0007669"/>
    <property type="project" value="UniProtKB-KW"/>
</dbReference>
<dbReference type="CDD" id="cd17966">
    <property type="entry name" value="DEADc_DDX5_DDX17"/>
    <property type="match status" value="1"/>
</dbReference>
<dbReference type="CDD" id="cd18787">
    <property type="entry name" value="SF2_C_DEAD"/>
    <property type="match status" value="1"/>
</dbReference>
<dbReference type="FunFam" id="3.40.50.300:FF:000008">
    <property type="entry name" value="ATP-dependent RNA helicase RhlB"/>
    <property type="match status" value="1"/>
</dbReference>
<dbReference type="FunFam" id="3.40.50.300:FF:000079">
    <property type="entry name" value="probable ATP-dependent RNA helicase DDX17"/>
    <property type="match status" value="1"/>
</dbReference>
<dbReference type="Gene3D" id="3.40.50.300">
    <property type="entry name" value="P-loop containing nucleotide triphosphate hydrolases"/>
    <property type="match status" value="2"/>
</dbReference>
<dbReference type="InterPro" id="IPR011545">
    <property type="entry name" value="DEAD/DEAH_box_helicase_dom"/>
</dbReference>
<dbReference type="InterPro" id="IPR014001">
    <property type="entry name" value="Helicase_ATP-bd"/>
</dbReference>
<dbReference type="InterPro" id="IPR001650">
    <property type="entry name" value="Helicase_C-like"/>
</dbReference>
<dbReference type="InterPro" id="IPR027417">
    <property type="entry name" value="P-loop_NTPase"/>
</dbReference>
<dbReference type="InterPro" id="IPR000629">
    <property type="entry name" value="RNA-helicase_DEAD-box_CS"/>
</dbReference>
<dbReference type="InterPro" id="IPR014014">
    <property type="entry name" value="RNA_helicase_DEAD_Q_motif"/>
</dbReference>
<dbReference type="PANTHER" id="PTHR47958">
    <property type="entry name" value="ATP-DEPENDENT RNA HELICASE DBP3"/>
    <property type="match status" value="1"/>
</dbReference>
<dbReference type="Pfam" id="PF00270">
    <property type="entry name" value="DEAD"/>
    <property type="match status" value="1"/>
</dbReference>
<dbReference type="Pfam" id="PF00271">
    <property type="entry name" value="Helicase_C"/>
    <property type="match status" value="1"/>
</dbReference>
<dbReference type="SMART" id="SM00487">
    <property type="entry name" value="DEXDc"/>
    <property type="match status" value="1"/>
</dbReference>
<dbReference type="SMART" id="SM00490">
    <property type="entry name" value="HELICc"/>
    <property type="match status" value="1"/>
</dbReference>
<dbReference type="SUPFAM" id="SSF52540">
    <property type="entry name" value="P-loop containing nucleoside triphosphate hydrolases"/>
    <property type="match status" value="1"/>
</dbReference>
<dbReference type="PROSITE" id="PS00039">
    <property type="entry name" value="DEAD_ATP_HELICASE"/>
    <property type="match status" value="1"/>
</dbReference>
<dbReference type="PROSITE" id="PS51192">
    <property type="entry name" value="HELICASE_ATP_BIND_1"/>
    <property type="match status" value="1"/>
</dbReference>
<dbReference type="PROSITE" id="PS51194">
    <property type="entry name" value="HELICASE_CTER"/>
    <property type="match status" value="1"/>
</dbReference>
<dbReference type="PROSITE" id="PS51195">
    <property type="entry name" value="Q_MOTIF"/>
    <property type="match status" value="1"/>
</dbReference>
<reference key="1">
    <citation type="journal article" date="2009" name="Nature">
        <title>Evolution of pathogenicity and sexual reproduction in eight Candida genomes.</title>
        <authorList>
            <person name="Butler G."/>
            <person name="Rasmussen M.D."/>
            <person name="Lin M.F."/>
            <person name="Santos M.A.S."/>
            <person name="Sakthikumar S."/>
            <person name="Munro C.A."/>
            <person name="Rheinbay E."/>
            <person name="Grabherr M."/>
            <person name="Forche A."/>
            <person name="Reedy J.L."/>
            <person name="Agrafioti I."/>
            <person name="Arnaud M.B."/>
            <person name="Bates S."/>
            <person name="Brown A.J.P."/>
            <person name="Brunke S."/>
            <person name="Costanzo M.C."/>
            <person name="Fitzpatrick D.A."/>
            <person name="de Groot P.W.J."/>
            <person name="Harris D."/>
            <person name="Hoyer L.L."/>
            <person name="Hube B."/>
            <person name="Klis F.M."/>
            <person name="Kodira C."/>
            <person name="Lennard N."/>
            <person name="Logue M.E."/>
            <person name="Martin R."/>
            <person name="Neiman A.M."/>
            <person name="Nikolaou E."/>
            <person name="Quail M.A."/>
            <person name="Quinn J."/>
            <person name="Santos M.C."/>
            <person name="Schmitzberger F.F."/>
            <person name="Sherlock G."/>
            <person name="Shah P."/>
            <person name="Silverstein K.A.T."/>
            <person name="Skrzypek M.S."/>
            <person name="Soll D."/>
            <person name="Staggs R."/>
            <person name="Stansfield I."/>
            <person name="Stumpf M.P.H."/>
            <person name="Sudbery P.E."/>
            <person name="Srikantha T."/>
            <person name="Zeng Q."/>
            <person name="Berman J."/>
            <person name="Berriman M."/>
            <person name="Heitman J."/>
            <person name="Gow N.A.R."/>
            <person name="Lorenz M.C."/>
            <person name="Birren B.W."/>
            <person name="Kellis M."/>
            <person name="Cuomo C.A."/>
        </authorList>
    </citation>
    <scope>NUCLEOTIDE SEQUENCE [LARGE SCALE GENOMIC DNA]</scope>
    <source>
        <strain>ATCC 11503 / BCRC 21390 / CBS 2605 / JCM 1781 / NBRC 1676 / NRRL YB-4239</strain>
    </source>
</reference>
<organism>
    <name type="scientific">Lodderomyces elongisporus (strain ATCC 11503 / CBS 2605 / JCM 1781 / NBRC 1676 / NRRL YB-4239)</name>
    <name type="common">Yeast</name>
    <name type="synonym">Saccharomyces elongisporus</name>
    <dbReference type="NCBI Taxonomy" id="379508"/>
    <lineage>
        <taxon>Eukaryota</taxon>
        <taxon>Fungi</taxon>
        <taxon>Dikarya</taxon>
        <taxon>Ascomycota</taxon>
        <taxon>Saccharomycotina</taxon>
        <taxon>Pichiomycetes</taxon>
        <taxon>Debaryomycetaceae</taxon>
        <taxon>Candida/Lodderomyces clade</taxon>
        <taxon>Lodderomyces</taxon>
    </lineage>
</organism>
<proteinExistence type="inferred from homology"/>
<sequence length="552" mass="59673">MSYNGGYGQNNGGYGGGQGGYGGRGGAGGYGGGRGGGYGGGGRSGGYGGRGGGGRFQDTRVELTTPEWDLESLPKFEKNFYNEHPNVTARTDREIEQFRKENEMSILGHDIPHPITSFDEAGFPDYVLNELKNQGFPKPTGIQCQGWPMALSGRDMVGIAATGSGKTLSYCLPGIVHINAQPLLKRGDGPIVLVLAPTRELACQIQTECSKFGASSRIRNTCVYGGAPKGPQIRDLANGVEICIATPGRLIDMLEAGKTNLKRVTYLVLDEADRMLDMGFEPQIRKIVDQIRPDRQTLMWSATWPKEVQNLARDYLDNPIQVTIGSLELAASHTITQIVQVVTEYQKRDLLVKHLESALADSNSKVLVFASTKRTCDEVTSYLRADGWPALAIHGDKEQHERDWVLKEFRQGSHSIMVATDVAARGIDVKGITHVVNYDMPGNIEDYVHRIGRTGRGGATGTAISFFTDNEKKLGGDLCKIMREAKQTIPPELQAYDRRSYGSHIRYGRGRGGRGGRGGWGGRGGGRGGGRGGGRGGYSSGSNTAPLGNRRF</sequence>
<name>DBP2_LODEL</name>
<evidence type="ECO:0000250" key="1"/>
<evidence type="ECO:0000255" key="2">
    <source>
        <dbReference type="PROSITE-ProRule" id="PRU00541"/>
    </source>
</evidence>
<evidence type="ECO:0000255" key="3">
    <source>
        <dbReference type="PROSITE-ProRule" id="PRU00542"/>
    </source>
</evidence>
<evidence type="ECO:0000256" key="4">
    <source>
        <dbReference type="SAM" id="MobiDB-lite"/>
    </source>
</evidence>
<evidence type="ECO:0000305" key="5"/>
<feature type="chain" id="PRO_0000294614" description="ATP-dependent RNA helicase DBP2">
    <location>
        <begin position="1"/>
        <end position="552"/>
    </location>
</feature>
<feature type="domain" description="Helicase ATP-binding" evidence="2">
    <location>
        <begin position="147"/>
        <end position="322"/>
    </location>
</feature>
<feature type="domain" description="Helicase C-terminal" evidence="3">
    <location>
        <begin position="337"/>
        <end position="497"/>
    </location>
</feature>
<feature type="region of interest" description="Disordered" evidence="4">
    <location>
        <begin position="504"/>
        <end position="552"/>
    </location>
</feature>
<feature type="short sequence motif" description="Q motif">
    <location>
        <begin position="116"/>
        <end position="144"/>
    </location>
</feature>
<feature type="short sequence motif" description="DEAD box">
    <location>
        <begin position="270"/>
        <end position="273"/>
    </location>
</feature>
<feature type="compositionally biased region" description="Gly residues" evidence="4">
    <location>
        <begin position="515"/>
        <end position="539"/>
    </location>
</feature>
<feature type="binding site" evidence="2">
    <location>
        <begin position="160"/>
        <end position="167"/>
    </location>
    <ligand>
        <name>ATP</name>
        <dbReference type="ChEBI" id="CHEBI:30616"/>
    </ligand>
</feature>
<gene>
    <name type="primary">DBP2</name>
    <name type="ORF">LELG_00212/LELG_00213</name>
</gene>